<evidence type="ECO:0000255" key="1">
    <source>
        <dbReference type="HAMAP-Rule" id="MF_00149"/>
    </source>
</evidence>
<proteinExistence type="inferred from homology"/>
<comment type="function">
    <text evidence="1">This protein is involved in the repair of mismatches in DNA. It is required for dam-dependent methyl-directed DNA mismatch repair. May act as a 'molecular matchmaker', a protein that promotes the formation of a stable complex between two or more DNA-binding proteins in an ATP-dependent manner without itself being part of a final effector complex.</text>
</comment>
<comment type="similarity">
    <text evidence="1">Belongs to the DNA mismatch repair MutL/HexB family.</text>
</comment>
<organism>
    <name type="scientific">Borreliella afzelii (strain PKo)</name>
    <name type="common">Borrelia afzelii</name>
    <dbReference type="NCBI Taxonomy" id="390236"/>
    <lineage>
        <taxon>Bacteria</taxon>
        <taxon>Pseudomonadati</taxon>
        <taxon>Spirochaetota</taxon>
        <taxon>Spirochaetia</taxon>
        <taxon>Spirochaetales</taxon>
        <taxon>Borreliaceae</taxon>
        <taxon>Borreliella</taxon>
    </lineage>
</organism>
<dbReference type="EMBL" id="CP000395">
    <property type="protein sequence ID" value="ABH01477.1"/>
    <property type="molecule type" value="Genomic_DNA"/>
</dbReference>
<dbReference type="EMBL" id="CP002933">
    <property type="protein sequence ID" value="AEL69439.1"/>
    <property type="molecule type" value="Genomic_DNA"/>
</dbReference>
<dbReference type="RefSeq" id="WP_004790591.1">
    <property type="nucleotide sequence ID" value="NZ_CP160066.1"/>
</dbReference>
<dbReference type="SMR" id="Q0SNV1"/>
<dbReference type="STRING" id="29518.BLA32_03245"/>
<dbReference type="GeneID" id="76831748"/>
<dbReference type="KEGG" id="baf:BAPKO_0218"/>
<dbReference type="KEGG" id="bafz:BafPKo_0211"/>
<dbReference type="PATRIC" id="fig|390236.22.peg.207"/>
<dbReference type="eggNOG" id="COG0323">
    <property type="taxonomic scope" value="Bacteria"/>
</dbReference>
<dbReference type="HOGENOM" id="CLU_004131_4_1_12"/>
<dbReference type="OrthoDB" id="9763467at2"/>
<dbReference type="Proteomes" id="UP000005216">
    <property type="component" value="Chromosome"/>
</dbReference>
<dbReference type="GO" id="GO:0032300">
    <property type="term" value="C:mismatch repair complex"/>
    <property type="evidence" value="ECO:0007669"/>
    <property type="project" value="InterPro"/>
</dbReference>
<dbReference type="GO" id="GO:0005524">
    <property type="term" value="F:ATP binding"/>
    <property type="evidence" value="ECO:0007669"/>
    <property type="project" value="InterPro"/>
</dbReference>
<dbReference type="GO" id="GO:0016887">
    <property type="term" value="F:ATP hydrolysis activity"/>
    <property type="evidence" value="ECO:0007669"/>
    <property type="project" value="InterPro"/>
</dbReference>
<dbReference type="GO" id="GO:0140664">
    <property type="term" value="F:ATP-dependent DNA damage sensor activity"/>
    <property type="evidence" value="ECO:0007669"/>
    <property type="project" value="InterPro"/>
</dbReference>
<dbReference type="GO" id="GO:0030983">
    <property type="term" value="F:mismatched DNA binding"/>
    <property type="evidence" value="ECO:0007669"/>
    <property type="project" value="InterPro"/>
</dbReference>
<dbReference type="GO" id="GO:0006298">
    <property type="term" value="P:mismatch repair"/>
    <property type="evidence" value="ECO:0007669"/>
    <property type="project" value="UniProtKB-UniRule"/>
</dbReference>
<dbReference type="CDD" id="cd16926">
    <property type="entry name" value="HATPase_MutL-MLH-PMS-like"/>
    <property type="match status" value="1"/>
</dbReference>
<dbReference type="CDD" id="cd00782">
    <property type="entry name" value="MutL_Trans"/>
    <property type="match status" value="1"/>
</dbReference>
<dbReference type="FunFam" id="3.30.565.10:FF:000003">
    <property type="entry name" value="DNA mismatch repair endonuclease MutL"/>
    <property type="match status" value="1"/>
</dbReference>
<dbReference type="Gene3D" id="3.30.230.10">
    <property type="match status" value="1"/>
</dbReference>
<dbReference type="Gene3D" id="3.30.565.10">
    <property type="entry name" value="Histidine kinase-like ATPase, C-terminal domain"/>
    <property type="match status" value="1"/>
</dbReference>
<dbReference type="Gene3D" id="3.30.1540.20">
    <property type="entry name" value="MutL, C-terminal domain, dimerisation subdomain"/>
    <property type="match status" value="1"/>
</dbReference>
<dbReference type="Gene3D" id="3.30.1370.100">
    <property type="entry name" value="MutL, C-terminal domain, regulatory subdomain"/>
    <property type="match status" value="1"/>
</dbReference>
<dbReference type="HAMAP" id="MF_00149">
    <property type="entry name" value="DNA_mis_repair"/>
    <property type="match status" value="1"/>
</dbReference>
<dbReference type="InterPro" id="IPR014762">
    <property type="entry name" value="DNA_mismatch_repair_CS"/>
</dbReference>
<dbReference type="InterPro" id="IPR020667">
    <property type="entry name" value="DNA_mismatch_repair_MutL"/>
</dbReference>
<dbReference type="InterPro" id="IPR013507">
    <property type="entry name" value="DNA_mismatch_S5_2-like"/>
</dbReference>
<dbReference type="InterPro" id="IPR036890">
    <property type="entry name" value="HATPase_C_sf"/>
</dbReference>
<dbReference type="InterPro" id="IPR002099">
    <property type="entry name" value="MutL/Mlh/PMS"/>
</dbReference>
<dbReference type="InterPro" id="IPR038973">
    <property type="entry name" value="MutL/Mlh/Pms-like"/>
</dbReference>
<dbReference type="InterPro" id="IPR014790">
    <property type="entry name" value="MutL_C"/>
</dbReference>
<dbReference type="InterPro" id="IPR042120">
    <property type="entry name" value="MutL_C_dimsub"/>
</dbReference>
<dbReference type="InterPro" id="IPR042121">
    <property type="entry name" value="MutL_C_regsub"/>
</dbReference>
<dbReference type="InterPro" id="IPR037198">
    <property type="entry name" value="MutL_C_sf"/>
</dbReference>
<dbReference type="InterPro" id="IPR020568">
    <property type="entry name" value="Ribosomal_Su5_D2-typ_SF"/>
</dbReference>
<dbReference type="InterPro" id="IPR014721">
    <property type="entry name" value="Ribsml_uS5_D2-typ_fold_subgr"/>
</dbReference>
<dbReference type="NCBIfam" id="TIGR00585">
    <property type="entry name" value="mutl"/>
    <property type="match status" value="1"/>
</dbReference>
<dbReference type="PANTHER" id="PTHR10073">
    <property type="entry name" value="DNA MISMATCH REPAIR PROTEIN MLH, PMS, MUTL"/>
    <property type="match status" value="1"/>
</dbReference>
<dbReference type="PANTHER" id="PTHR10073:SF12">
    <property type="entry name" value="DNA MISMATCH REPAIR PROTEIN MLH1"/>
    <property type="match status" value="1"/>
</dbReference>
<dbReference type="Pfam" id="PF01119">
    <property type="entry name" value="DNA_mis_repair"/>
    <property type="match status" value="1"/>
</dbReference>
<dbReference type="Pfam" id="PF13589">
    <property type="entry name" value="HATPase_c_3"/>
    <property type="match status" value="1"/>
</dbReference>
<dbReference type="Pfam" id="PF08676">
    <property type="entry name" value="MutL_C"/>
    <property type="match status" value="1"/>
</dbReference>
<dbReference type="SMART" id="SM01340">
    <property type="entry name" value="DNA_mis_repair"/>
    <property type="match status" value="1"/>
</dbReference>
<dbReference type="SMART" id="SM00853">
    <property type="entry name" value="MutL_C"/>
    <property type="match status" value="1"/>
</dbReference>
<dbReference type="SUPFAM" id="SSF55874">
    <property type="entry name" value="ATPase domain of HSP90 chaperone/DNA topoisomerase II/histidine kinase"/>
    <property type="match status" value="1"/>
</dbReference>
<dbReference type="SUPFAM" id="SSF118116">
    <property type="entry name" value="DNA mismatch repair protein MutL"/>
    <property type="match status" value="1"/>
</dbReference>
<dbReference type="SUPFAM" id="SSF54211">
    <property type="entry name" value="Ribosomal protein S5 domain 2-like"/>
    <property type="match status" value="1"/>
</dbReference>
<dbReference type="PROSITE" id="PS00058">
    <property type="entry name" value="DNA_MISMATCH_REPAIR_1"/>
    <property type="match status" value="1"/>
</dbReference>
<protein>
    <recommendedName>
        <fullName evidence="1">DNA mismatch repair protein MutL</fullName>
    </recommendedName>
</protein>
<accession>Q0SNV1</accession>
<accession>G0IR53</accession>
<gene>
    <name evidence="1" type="primary">mutL</name>
    <name type="ordered locus">BAPKO_0218</name>
    <name type="ordered locus">BafPKo_0211</name>
</gene>
<name>MUTL_BORAP</name>
<feature type="chain" id="PRO_1000009989" description="DNA mismatch repair protein MutL">
    <location>
        <begin position="1"/>
        <end position="611"/>
    </location>
</feature>
<reference key="1">
    <citation type="journal article" date="2006" name="BMC Genomics">
        <title>Comparative genome analysis: selection pressure on the Borrelia vls cassettes is essential for infectivity.</title>
        <authorList>
            <person name="Gloeckner G."/>
            <person name="Schulte-Spechtel U."/>
            <person name="Schilhabel M."/>
            <person name="Felder M."/>
            <person name="Suehnel J."/>
            <person name="Wilske B."/>
            <person name="Platzer M."/>
        </authorList>
    </citation>
    <scope>NUCLEOTIDE SEQUENCE [LARGE SCALE GENOMIC DNA]</scope>
    <source>
        <strain>PKo</strain>
    </source>
</reference>
<reference key="2">
    <citation type="journal article" date="2011" name="J. Bacteriol.">
        <title>Whole-genome sequences of two Borrelia afzelii and two Borrelia garinii Lyme disease agent isolates.</title>
        <authorList>
            <person name="Casjens S.R."/>
            <person name="Mongodin E.F."/>
            <person name="Qiu W.G."/>
            <person name="Dunn J.J."/>
            <person name="Luft B.J."/>
            <person name="Fraser-Liggett C.M."/>
            <person name="Schutzer S.E."/>
        </authorList>
    </citation>
    <scope>NUCLEOTIDE SEQUENCE [LARGE SCALE GENOMIC DNA]</scope>
    <source>
        <strain>PKo</strain>
    </source>
</reference>
<sequence length="611" mass="71410">MNKIRFLDKYLVQKIAAGESIDRPCSILRELLDNSIDSGATKIEVFLEEGGIQKILIIDNGSGISQEDLKICYLPHTTSKISSEEDLRKIETLGFRGEALSSIAICSNISITSSTTGNESYQIEVENGIEKCFKKQPAINGTIVDVTKIFHNFPARKRFLKQEPIETKMCLKVLEEKIITHPEINFEINLNQKLRKIYFKESLIDRVQNVYGNVIENNKFKVLKKEHENIKIEIFLAPANFSKKSKRHIKTFVNRRPIDQKDLLEAITNGHSRILSPGNFPICYLFLEINPEYIDFNVHPQKKEVRFFNLPFLFKLISDNINNFFDKDTNNYHDVIIKRQLTDDDHLIEMINQSENFNKTSTYDVPQNKNLETEDNTNEPNKNMIQKDVGLRKYNSIIENRPSLKENITNIFSDSFLEFEEPPNKNEEEDIKFNYIGQIFSEFLIVEKANEIYFIDQHAVHEKIIYEKLRNSKKTIQKLLIPIEFTIVDKNIEKIIDSEIEEYKKMDIIISKIGSEKYQLESIPNICNQYENTLINFFQSRRSRTINSLESDLYATIACRKAVKTNDILSVEFSKYLINEFFKLEIKHCPHGRKIYYKISKFELEKKVDRA</sequence>
<keyword id="KW-0227">DNA damage</keyword>
<keyword id="KW-0234">DNA repair</keyword>